<proteinExistence type="evidence at protein level"/>
<keyword id="KW-0903">Direct protein sequencing</keyword>
<keyword id="KW-1015">Disulfide bond</keyword>
<keyword id="KW-0964">Secreted</keyword>
<keyword id="KW-0800">Toxin</keyword>
<protein>
    <recommendedName>
        <fullName evidence="2">Conotoxin ar5d</fullName>
    </recommendedName>
</protein>
<feature type="peptide" id="PRO_0000441657" description="Conotoxin ar5d" evidence="1">
    <location>
        <begin position="1"/>
        <end position="10"/>
    </location>
</feature>
<feature type="unsure residue" description="I or L" evidence="2">
    <location>
        <position position="5"/>
    </location>
</feature>
<reference key="1">
    <citation type="journal article" date="2015" name="Toxicon">
        <title>A sleep-inducing peptide from the venom of the Indian cone snail Conus araneosus.</title>
        <authorList>
            <person name="Franklin J.B."/>
            <person name="Rajesh R.P."/>
        </authorList>
    </citation>
    <scope>PROTEIN SEQUENCE</scope>
    <scope>SUBCELLULAR LOCATION</scope>
    <scope>MASS SPECTROMETRY</scope>
    <scope>IDENTIFICATION BY MASS SPECTROMETRY</scope>
    <source>
        <tissue>Venom</tissue>
    </source>
</reference>
<accession>C0HKY5</accession>
<sequence>DGCCIAKQCC</sequence>
<dbReference type="GO" id="GO:0005576">
    <property type="term" value="C:extracellular region"/>
    <property type="evidence" value="ECO:0000314"/>
    <property type="project" value="UniProtKB"/>
</dbReference>
<dbReference type="GO" id="GO:0090729">
    <property type="term" value="F:toxin activity"/>
    <property type="evidence" value="ECO:0007669"/>
    <property type="project" value="UniProtKB-KW"/>
</dbReference>
<evidence type="ECO:0000269" key="1">
    <source>
    </source>
</evidence>
<evidence type="ECO:0000303" key="2">
    <source>
    </source>
</evidence>
<evidence type="ECO:0000305" key="3"/>
<evidence type="ECO:0000305" key="4">
    <source>
    </source>
</evidence>
<comment type="subcellular location">
    <subcellularLocation>
        <location evidence="1">Secreted</location>
    </subcellularLocation>
</comment>
<comment type="tissue specificity">
    <text evidence="4">Expressed by the venom duct.</text>
</comment>
<comment type="domain">
    <text evidence="2">The cysteine framework is V (CC-CC).</text>
</comment>
<comment type="PTM">
    <text evidence="3">Contains 2 disulfide bonds that can be either 'C1-C3, C2-C4' or 'C1-C4, C2-C3', since these disulfide connectivities have been observed for conotoxins with cysteine framework V (for examples, see AC P0DQQ7 and AC P81755).</text>
</comment>
<comment type="mass spectrometry"/>
<comment type="similarity">
    <text evidence="3">Belongs to the conotoxin T superfamily.</text>
</comment>
<name>CT5D_CONAO</name>
<organism>
    <name type="scientific">Conus araneosus</name>
    <name type="common">Cobweb cone</name>
    <dbReference type="NCBI Taxonomy" id="101286"/>
    <lineage>
        <taxon>Eukaryota</taxon>
        <taxon>Metazoa</taxon>
        <taxon>Spiralia</taxon>
        <taxon>Lophotrochozoa</taxon>
        <taxon>Mollusca</taxon>
        <taxon>Gastropoda</taxon>
        <taxon>Caenogastropoda</taxon>
        <taxon>Neogastropoda</taxon>
        <taxon>Conoidea</taxon>
        <taxon>Conidae</taxon>
        <taxon>Conus</taxon>
    </lineage>
</organism>